<name>VIF_HV1Z2</name>
<organismHost>
    <name type="scientific">Homo sapiens</name>
    <name type="common">Human</name>
    <dbReference type="NCBI Taxonomy" id="9606"/>
</organismHost>
<proteinExistence type="inferred from homology"/>
<comment type="function">
    <text evidence="2">Counteracts the innate antiviral activity of host APOBEC3F and APOBEC3G by promoting their ubiquitination and degradation. Acts as a substrate recognition component of an E3 ubiquitin-protein ligase complex: mechanistically, Vif hijacks a host cullin-5-RING E3 ubiquitin-protein ligase complex (ECS complex) and the transcription coactivator CBFB/CBF-beta to form an active E3 ubiquitin-protein ligase complex that targets APOBEC3G and APOBEC3F for polyubiquitination, leading to their degradation by the proteasome. Vif interaction with APOBEC3G also blocks its cytidine deaminase activity in a proteasome-independent manner, suggesting a dual inhibitory mechanism. May interact directly with APOBEC3G mRNA in order to inhibit its translation. Association with CBFB/CBF-beta also inhibits the transcription coactivator activity of CBFB/CBF-beta. Seems to play a role in viral morphology by affecting the stability of the viral nucleoprotein core. Finally, Vif also contributes to the G2 cell cycle arrest observed in HIV infected cells.</text>
</comment>
<comment type="subunit">
    <text evidence="1">Homomultimer; in vitro and presumably in vivo. Interacts with viral RNA and Pr55Gag precursor; these interactions mediate Vif incorporation into the virion. Interacts with the viral reverse transcriptase. Forms cullin-5-RING E3 ubiquitin-protein ligase complex (ECS complex) by interacting with host CUL5, RBX2, elongin BC complex (ELOB and ELOC) and CBFB/CBF-beta. Within the ECS complex, Vif interacts directly with host CUL5, ELOC and APOBEC (APOBEC3F and APOBEC3G) substrates. The ECS complex also contains some single-stranded RNA (ssRNA) that acts as a glue that bridges Vif with APOBEC (APOBEC3F and APOBEC3G) substrates. Interacts with host UBCE7IP1 isoform 3/ZIN and possibly with SAT. Interacts with host tyrosine kinases HCK and FYN; these interactions may decrease level of phosphorylated APOBEC3G incorporation into virions. Interacts with host ABCE1; this interaction may play a role in protecting viral RNA from damage during viral assembly. Interacts with host MDM2; this interaction targets Vif for degradation by the proteasome.</text>
</comment>
<comment type="subcellular location">
    <subcellularLocation>
        <location evidence="2">Host cytoplasm</location>
    </subcellularLocation>
    <subcellularLocation>
        <location evidence="2">Host cell membrane</location>
        <topology evidence="2">Peripheral membrane protein</topology>
        <orientation evidence="2">Cytoplasmic side</orientation>
    </subcellularLocation>
    <subcellularLocation>
        <location evidence="2">Virion</location>
    </subcellularLocation>
    <text evidence="2">In the cytoplasm, seems to colocalize with intermediate filament vimentin. A fraction is associated with the cytoplasmic side of cellular membranes, presumably via the interaction with Pr55Gag precursor. Incorporated in virions at a ratio of approximately 7 to 20 molecules per virion.</text>
</comment>
<comment type="induction">
    <text evidence="2">Expressed late during infection in a Rev-dependent manner.</text>
</comment>
<comment type="domain">
    <text evidence="2">The BC-like-box motif mediates the interaction with elongin BC complex.</text>
</comment>
<comment type="domain">
    <text evidence="2">The HCCH motif (H-x(5)-C-x(18)-C-x(5)-H) mediates the interaction with CUL5.</text>
</comment>
<comment type="PTM">
    <text evidence="2">Processed in virion by the viral protease.</text>
</comment>
<comment type="PTM">
    <text evidence="2">Highly phosphorylated on serine and threonine residues.</text>
</comment>
<comment type="PTM">
    <text evidence="2">Polyubiquitinated and degraded by the proteasome in the presence of APOBEC3G.</text>
</comment>
<comment type="miscellaneous">
    <text evidence="2">Vif-defective viruses show catastrophic failure in reverse transcription due to APOBEC-induced mutations that initiate a DNA base repair pathway and compromise the structural integrity of the ssDNA. In the absence of Vif, the virion is morphologically abnormal.</text>
</comment>
<comment type="miscellaneous">
    <text evidence="2">HIV-1 lineages are divided in three main groups, M (for Major), O (for Outlier), and N (for New, or Non-M, Non-O). The vast majority of strains found worldwide belong to the group M. Group O seems to be endemic to and largely confined to Cameroon and neighboring countries in West Central Africa, where these viruses represent a small minority of HIV-1 strains. The group N is represented by a limited number of isolates from Cameroonian persons. The group M is further subdivided in 9 clades or subtypes (A to D, F to H, J and K).</text>
</comment>
<comment type="miscellaneous">
    <text evidence="2">Required for replication in 'nonpermissive' cells, including primary T-cells, macrophages and certain T-cell lines, but is dispensable for replication in 'permissive' cell lines, such as 293T cells. In nonpermissive cells, Vif-defective viruses can produce virions, but they fail to complete reverse transcription and cannot successfully infect new cells.</text>
</comment>
<comment type="similarity">
    <text evidence="2">Belongs to the primate lentivirus group Vif protein family.</text>
</comment>
<organism>
    <name type="scientific">Human immunodeficiency virus type 1 group M subtype D (isolate Z2/CDC-Z34)</name>
    <name type="common">HIV-1</name>
    <dbReference type="NCBI Taxonomy" id="11683"/>
    <lineage>
        <taxon>Viruses</taxon>
        <taxon>Riboviria</taxon>
        <taxon>Pararnavirae</taxon>
        <taxon>Artverviricota</taxon>
        <taxon>Revtraviricetes</taxon>
        <taxon>Ortervirales</taxon>
        <taxon>Retroviridae</taxon>
        <taxon>Orthoretrovirinae</taxon>
        <taxon>Lentivirus</taxon>
        <taxon>Human immunodeficiency virus type 1</taxon>
    </lineage>
</organism>
<feature type="chain" id="PRO_0000043041" description="Virion infectivity factor" evidence="2">
    <location>
        <begin position="1"/>
        <end position="192"/>
    </location>
</feature>
<feature type="chain" id="PRO_0000043042" description="p17" evidence="2">
    <location>
        <begin position="1"/>
        <end position="150"/>
    </location>
</feature>
<feature type="chain" id="PRO_0000043043" description="p7" evidence="2">
    <location>
        <begin position="151"/>
        <end position="192"/>
    </location>
</feature>
<feature type="region of interest" description="Interaction with host APOBEC3F; F1-box" evidence="2">
    <location>
        <begin position="14"/>
        <end position="17"/>
    </location>
</feature>
<feature type="region of interest" description="Interaction with host APOBEC3G; G-box" evidence="2">
    <location>
        <begin position="40"/>
        <end position="44"/>
    </location>
</feature>
<feature type="region of interest" description="Interaction with host APOBEC3F and APOBEC3G; FG-box" evidence="2">
    <location>
        <begin position="54"/>
        <end position="72"/>
    </location>
</feature>
<feature type="region of interest" description="Interaction with host APOBEC3F; F2-box" evidence="2">
    <location>
        <begin position="74"/>
        <end position="79"/>
    </location>
</feature>
<feature type="region of interest" description="RNA-binding" evidence="2">
    <location>
        <begin position="75"/>
        <end position="114"/>
    </location>
</feature>
<feature type="region of interest" description="SOCS box-like" evidence="2">
    <location>
        <begin position="151"/>
        <end position="180"/>
    </location>
</feature>
<feature type="region of interest" description="Multimerization" evidence="2">
    <location>
        <begin position="151"/>
        <end position="164"/>
    </location>
</feature>
<feature type="region of interest" description="Disordered" evidence="3">
    <location>
        <begin position="165"/>
        <end position="192"/>
    </location>
</feature>
<feature type="region of interest" description="Membrane association" evidence="2">
    <location>
        <begin position="171"/>
        <end position="172"/>
    </location>
</feature>
<feature type="short sequence motif" description="HCCH motif" evidence="2">
    <location>
        <begin position="108"/>
        <end position="139"/>
    </location>
</feature>
<feature type="short sequence motif" description="BC-box-like motif" evidence="2">
    <location>
        <begin position="144"/>
        <end position="153"/>
    </location>
</feature>
<feature type="compositionally biased region" description="Basic residues" evidence="3">
    <location>
        <begin position="176"/>
        <end position="186"/>
    </location>
</feature>
<feature type="binding site" evidence="2">
    <location>
        <position position="108"/>
    </location>
    <ligand>
        <name>Zn(2+)</name>
        <dbReference type="ChEBI" id="CHEBI:29105"/>
    </ligand>
</feature>
<feature type="binding site" evidence="2">
    <location>
        <position position="114"/>
    </location>
    <ligand>
        <name>Zn(2+)</name>
        <dbReference type="ChEBI" id="CHEBI:29105"/>
    </ligand>
</feature>
<feature type="binding site" evidence="2">
    <location>
        <position position="133"/>
    </location>
    <ligand>
        <name>Zn(2+)</name>
        <dbReference type="ChEBI" id="CHEBI:29105"/>
    </ligand>
</feature>
<feature type="binding site" evidence="2">
    <location>
        <position position="139"/>
    </location>
    <ligand>
        <name>Zn(2+)</name>
        <dbReference type="ChEBI" id="CHEBI:29105"/>
    </ligand>
</feature>
<feature type="site" description="Cleavage in virion (by viral protease)" evidence="2">
    <location>
        <begin position="150"/>
        <end position="151"/>
    </location>
</feature>
<feature type="modified residue" description="Phosphothreonine; by host MAP4K1" evidence="2">
    <location>
        <position position="96"/>
    </location>
</feature>
<feature type="modified residue" description="Phosphoserine; by host" evidence="2">
    <location>
        <position position="144"/>
    </location>
</feature>
<feature type="modified residue" description="Phosphoserine; by host MAP4K1" evidence="2">
    <location>
        <position position="165"/>
    </location>
</feature>
<feature type="modified residue" description="Phosphothreonine; by host" evidence="2">
    <location>
        <position position="188"/>
    </location>
</feature>
<sequence>MENRWQVMIVWQVDRMRIRTWKSLVKHHMYVSKKASRWFYRHHYDSPHPKISSEVHIPLGEAMLVVKTYWGLHTGERDWHLGQGVSIEWRKRRYSTQVDPGLADQLIHMYYFDCFSEAAIRKAILGHIVSHRCEYQAGHSKVGSLQYLALTALVAPKKIKPPLPSVRKLTEDRWNKPQKTKGHKGSHTMNGH</sequence>
<keyword id="KW-0014">AIDS</keyword>
<keyword id="KW-1032">Host cell membrane</keyword>
<keyword id="KW-1035">Host cytoplasm</keyword>
<keyword id="KW-1043">Host membrane</keyword>
<keyword id="KW-0945">Host-virus interaction</keyword>
<keyword id="KW-0472">Membrane</keyword>
<keyword id="KW-0479">Metal-binding</keyword>
<keyword id="KW-0597">Phosphoprotein</keyword>
<keyword id="KW-0694">RNA-binding</keyword>
<keyword id="KW-0832">Ubl conjugation</keyword>
<keyword id="KW-0833">Ubl conjugation pathway</keyword>
<keyword id="KW-0946">Virion</keyword>
<keyword id="KW-0862">Zinc</keyword>
<dbReference type="EMBL" id="M22639">
    <property type="protein sequence ID" value="AAA45367.1"/>
    <property type="molecule type" value="Genomic_RNA"/>
</dbReference>
<dbReference type="PIR" id="S54379">
    <property type="entry name" value="S54379"/>
</dbReference>
<dbReference type="SMR" id="P12503"/>
<dbReference type="Proteomes" id="UP000155099">
    <property type="component" value="Genome"/>
</dbReference>
<dbReference type="GO" id="GO:0030430">
    <property type="term" value="C:host cell cytoplasm"/>
    <property type="evidence" value="ECO:0007669"/>
    <property type="project" value="UniProtKB-SubCell"/>
</dbReference>
<dbReference type="GO" id="GO:0020002">
    <property type="term" value="C:host cell plasma membrane"/>
    <property type="evidence" value="ECO:0007669"/>
    <property type="project" value="UniProtKB-SubCell"/>
</dbReference>
<dbReference type="GO" id="GO:0016020">
    <property type="term" value="C:membrane"/>
    <property type="evidence" value="ECO:0007669"/>
    <property type="project" value="UniProtKB-UniRule"/>
</dbReference>
<dbReference type="GO" id="GO:0044423">
    <property type="term" value="C:virion component"/>
    <property type="evidence" value="ECO:0007669"/>
    <property type="project" value="UniProtKB-UniRule"/>
</dbReference>
<dbReference type="GO" id="GO:0046872">
    <property type="term" value="F:metal ion binding"/>
    <property type="evidence" value="ECO:0007669"/>
    <property type="project" value="UniProtKB-KW"/>
</dbReference>
<dbReference type="GO" id="GO:0003723">
    <property type="term" value="F:RNA binding"/>
    <property type="evidence" value="ECO:0007669"/>
    <property type="project" value="UniProtKB-UniRule"/>
</dbReference>
<dbReference type="GO" id="GO:0019058">
    <property type="term" value="P:viral life cycle"/>
    <property type="evidence" value="ECO:0007669"/>
    <property type="project" value="InterPro"/>
</dbReference>
<dbReference type="HAMAP" id="MF_04081">
    <property type="entry name" value="HIV_VIF"/>
    <property type="match status" value="1"/>
</dbReference>
<dbReference type="InterPro" id="IPR000475">
    <property type="entry name" value="Vif"/>
</dbReference>
<dbReference type="Pfam" id="PF00559">
    <property type="entry name" value="Vif"/>
    <property type="match status" value="1"/>
</dbReference>
<dbReference type="PRINTS" id="PR00349">
    <property type="entry name" value="VIRIONINFFCT"/>
</dbReference>
<gene>
    <name evidence="2" type="primary">vif</name>
</gene>
<evidence type="ECO:0000250" key="1">
    <source>
        <dbReference type="UniProtKB" id="O70897"/>
    </source>
</evidence>
<evidence type="ECO:0000255" key="2">
    <source>
        <dbReference type="HAMAP-Rule" id="MF_04081"/>
    </source>
</evidence>
<evidence type="ECO:0000256" key="3">
    <source>
        <dbReference type="SAM" id="MobiDB-lite"/>
    </source>
</evidence>
<protein>
    <recommendedName>
        <fullName evidence="2">Virion infectivity factor</fullName>
        <shortName evidence="2">Vif</shortName>
    </recommendedName>
    <alternativeName>
        <fullName evidence="2">SOR protein</fullName>
    </alternativeName>
    <component>
        <recommendedName>
            <fullName evidence="2">p17</fullName>
        </recommendedName>
    </component>
    <component>
        <recommendedName>
            <fullName evidence="2">p7</fullName>
        </recommendedName>
    </component>
</protein>
<reference key="1">
    <citation type="submission" date="1989-07" db="EMBL/GenBank/DDBJ databases">
        <authorList>
            <person name="Theodore T."/>
            <person name="Buckler-White A.J."/>
        </authorList>
    </citation>
    <scope>NUCLEOTIDE SEQUENCE [GENOMIC RNA]</scope>
</reference>
<reference key="2">
    <citation type="journal article" date="2004" name="Trends Mol. Med.">
        <title>The viral infectivity factor (Vif) of HIV-1 unveiled.</title>
        <authorList>
            <person name="Rose K.M."/>
            <person name="Marin M."/>
            <person name="Kozak S.L."/>
            <person name="Kabat D."/>
        </authorList>
    </citation>
    <scope>REVIEW</scope>
</reference>
<accession>P12503</accession>